<dbReference type="EMBL" id="AAFI02000057">
    <property type="protein sequence ID" value="EAL65496.1"/>
    <property type="molecule type" value="Genomic_DNA"/>
</dbReference>
<dbReference type="RefSeq" id="XP_638912.1">
    <property type="nucleotide sequence ID" value="XM_633820.1"/>
</dbReference>
<dbReference type="SMR" id="Q54QF9"/>
<dbReference type="FunCoup" id="Q54QF9">
    <property type="interactions" value="554"/>
</dbReference>
<dbReference type="STRING" id="44689.Q54QF9"/>
<dbReference type="PaxDb" id="44689-DDB0216255"/>
<dbReference type="EnsemblProtists" id="EAL65496">
    <property type="protein sequence ID" value="EAL65496"/>
    <property type="gene ID" value="DDB_G0283763"/>
</dbReference>
<dbReference type="GeneID" id="8624309"/>
<dbReference type="KEGG" id="ddi:DDB_G0283763"/>
<dbReference type="dictyBase" id="DDB_G0283763">
    <property type="gene designation" value="grpE"/>
</dbReference>
<dbReference type="VEuPathDB" id="AmoebaDB:DDB_G0283763"/>
<dbReference type="eggNOG" id="KOG3003">
    <property type="taxonomic scope" value="Eukaryota"/>
</dbReference>
<dbReference type="HOGENOM" id="CLU_057217_0_1_1"/>
<dbReference type="InParanoid" id="Q54QF9"/>
<dbReference type="OMA" id="PHRHQAI"/>
<dbReference type="PhylomeDB" id="Q54QF9"/>
<dbReference type="PRO" id="PR:Q54QF9"/>
<dbReference type="Proteomes" id="UP000002195">
    <property type="component" value="Chromosome 4"/>
</dbReference>
<dbReference type="GO" id="GO:0005759">
    <property type="term" value="C:mitochondrial matrix"/>
    <property type="evidence" value="ECO:0000250"/>
    <property type="project" value="dictyBase"/>
</dbReference>
<dbReference type="GO" id="GO:0005739">
    <property type="term" value="C:mitochondrion"/>
    <property type="evidence" value="ECO:0000250"/>
    <property type="project" value="dictyBase"/>
</dbReference>
<dbReference type="GO" id="GO:0001405">
    <property type="term" value="C:PAM complex, Tim23 associated import motor"/>
    <property type="evidence" value="ECO:0000250"/>
    <property type="project" value="dictyBase"/>
</dbReference>
<dbReference type="GO" id="GO:0000774">
    <property type="term" value="F:adenyl-nucleotide exchange factor activity"/>
    <property type="evidence" value="ECO:0000250"/>
    <property type="project" value="dictyBase"/>
</dbReference>
<dbReference type="GO" id="GO:0042803">
    <property type="term" value="F:protein homodimerization activity"/>
    <property type="evidence" value="ECO:0007669"/>
    <property type="project" value="InterPro"/>
</dbReference>
<dbReference type="GO" id="GO:0051087">
    <property type="term" value="F:protein-folding chaperone binding"/>
    <property type="evidence" value="ECO:0007669"/>
    <property type="project" value="InterPro"/>
</dbReference>
<dbReference type="GO" id="GO:0051082">
    <property type="term" value="F:unfolded protein binding"/>
    <property type="evidence" value="ECO:0000318"/>
    <property type="project" value="GO_Central"/>
</dbReference>
<dbReference type="GO" id="GO:0006457">
    <property type="term" value="P:protein folding"/>
    <property type="evidence" value="ECO:0007669"/>
    <property type="project" value="InterPro"/>
</dbReference>
<dbReference type="GO" id="GO:0030150">
    <property type="term" value="P:protein import into mitochondrial matrix"/>
    <property type="evidence" value="ECO:0000250"/>
    <property type="project" value="dictyBase"/>
</dbReference>
<dbReference type="CDD" id="cd00446">
    <property type="entry name" value="GrpE"/>
    <property type="match status" value="1"/>
</dbReference>
<dbReference type="FunFam" id="2.30.22.10:FF:000002">
    <property type="entry name" value="GrpE protein homolog"/>
    <property type="match status" value="1"/>
</dbReference>
<dbReference type="FunFam" id="3.90.20.20:FF:000018">
    <property type="entry name" value="GrpE protein homolog"/>
    <property type="match status" value="1"/>
</dbReference>
<dbReference type="Gene3D" id="3.90.20.20">
    <property type="match status" value="1"/>
</dbReference>
<dbReference type="Gene3D" id="2.30.22.10">
    <property type="entry name" value="Head domain of nucleotide exchange factor GrpE"/>
    <property type="match status" value="1"/>
</dbReference>
<dbReference type="HAMAP" id="MF_01151">
    <property type="entry name" value="GrpE"/>
    <property type="match status" value="1"/>
</dbReference>
<dbReference type="InterPro" id="IPR000740">
    <property type="entry name" value="GrpE"/>
</dbReference>
<dbReference type="InterPro" id="IPR013805">
    <property type="entry name" value="GrpE_coiled_coil"/>
</dbReference>
<dbReference type="InterPro" id="IPR009012">
    <property type="entry name" value="GrpE_head"/>
</dbReference>
<dbReference type="PANTHER" id="PTHR21237">
    <property type="entry name" value="GRPE PROTEIN"/>
    <property type="match status" value="1"/>
</dbReference>
<dbReference type="PANTHER" id="PTHR21237:SF23">
    <property type="entry name" value="GRPE PROTEIN HOMOLOG, MITOCHONDRIAL"/>
    <property type="match status" value="1"/>
</dbReference>
<dbReference type="Pfam" id="PF01025">
    <property type="entry name" value="GrpE"/>
    <property type="match status" value="1"/>
</dbReference>
<dbReference type="PRINTS" id="PR00773">
    <property type="entry name" value="GRPEPROTEIN"/>
</dbReference>
<dbReference type="SUPFAM" id="SSF58014">
    <property type="entry name" value="Coiled-coil domain of nucleotide exchange factor GrpE"/>
    <property type="match status" value="1"/>
</dbReference>
<dbReference type="SUPFAM" id="SSF51064">
    <property type="entry name" value="Head domain of nucleotide exchange factor GrpE"/>
    <property type="match status" value="1"/>
</dbReference>
<comment type="function">
    <text evidence="1">Essential component of the PAM complex, a complex required for the translocation of transit peptide-containing proteins from the inner membrane into the mitochondrial matrix in an ATP-dependent manner. Seems to control the nucleotide-dependent binding of mitochondrial HSP70 to substrate proteins (By similarity).</text>
</comment>
<comment type="subunit">
    <text evidence="1">Probable component of the PAM complex at least composed of a mitochondrial HSP70 protein, grepE, tim16 and tim14.</text>
</comment>
<comment type="subcellular location">
    <subcellularLocation>
        <location evidence="4">Mitochondrion matrix</location>
    </subcellularLocation>
</comment>
<comment type="similarity">
    <text evidence="4">Belongs to the GrpE family.</text>
</comment>
<protein>
    <recommendedName>
        <fullName>GrpE protein homolog, mitochondrial</fullName>
    </recommendedName>
    <alternativeName>
        <fullName>dRoe1</fullName>
    </alternativeName>
</protein>
<reference key="1">
    <citation type="journal article" date="2005" name="Nature">
        <title>The genome of the social amoeba Dictyostelium discoideum.</title>
        <authorList>
            <person name="Eichinger L."/>
            <person name="Pachebat J.A."/>
            <person name="Gloeckner G."/>
            <person name="Rajandream M.A."/>
            <person name="Sucgang R."/>
            <person name="Berriman M."/>
            <person name="Song J."/>
            <person name="Olsen R."/>
            <person name="Szafranski K."/>
            <person name="Xu Q."/>
            <person name="Tunggal B."/>
            <person name="Kummerfeld S."/>
            <person name="Madera M."/>
            <person name="Konfortov B.A."/>
            <person name="Rivero F."/>
            <person name="Bankier A.T."/>
            <person name="Lehmann R."/>
            <person name="Hamlin N."/>
            <person name="Davies R."/>
            <person name="Gaudet P."/>
            <person name="Fey P."/>
            <person name="Pilcher K."/>
            <person name="Chen G."/>
            <person name="Saunders D."/>
            <person name="Sodergren E.J."/>
            <person name="Davis P."/>
            <person name="Kerhornou A."/>
            <person name="Nie X."/>
            <person name="Hall N."/>
            <person name="Anjard C."/>
            <person name="Hemphill L."/>
            <person name="Bason N."/>
            <person name="Farbrother P."/>
            <person name="Desany B."/>
            <person name="Just E."/>
            <person name="Morio T."/>
            <person name="Rost R."/>
            <person name="Churcher C.M."/>
            <person name="Cooper J."/>
            <person name="Haydock S."/>
            <person name="van Driessche N."/>
            <person name="Cronin A."/>
            <person name="Goodhead I."/>
            <person name="Muzny D.M."/>
            <person name="Mourier T."/>
            <person name="Pain A."/>
            <person name="Lu M."/>
            <person name="Harper D."/>
            <person name="Lindsay R."/>
            <person name="Hauser H."/>
            <person name="James K.D."/>
            <person name="Quiles M."/>
            <person name="Madan Babu M."/>
            <person name="Saito T."/>
            <person name="Buchrieser C."/>
            <person name="Wardroper A."/>
            <person name="Felder M."/>
            <person name="Thangavelu M."/>
            <person name="Johnson D."/>
            <person name="Knights A."/>
            <person name="Loulseged H."/>
            <person name="Mungall K.L."/>
            <person name="Oliver K."/>
            <person name="Price C."/>
            <person name="Quail M.A."/>
            <person name="Urushihara H."/>
            <person name="Hernandez J."/>
            <person name="Rabbinowitsch E."/>
            <person name="Steffen D."/>
            <person name="Sanders M."/>
            <person name="Ma J."/>
            <person name="Kohara Y."/>
            <person name="Sharp S."/>
            <person name="Simmonds M.N."/>
            <person name="Spiegler S."/>
            <person name="Tivey A."/>
            <person name="Sugano S."/>
            <person name="White B."/>
            <person name="Walker D."/>
            <person name="Woodward J.R."/>
            <person name="Winckler T."/>
            <person name="Tanaka Y."/>
            <person name="Shaulsky G."/>
            <person name="Schleicher M."/>
            <person name="Weinstock G.M."/>
            <person name="Rosenthal A."/>
            <person name="Cox E.C."/>
            <person name="Chisholm R.L."/>
            <person name="Gibbs R.A."/>
            <person name="Loomis W.F."/>
            <person name="Platzer M."/>
            <person name="Kay R.R."/>
            <person name="Williams J.G."/>
            <person name="Dear P.H."/>
            <person name="Noegel A.A."/>
            <person name="Barrell B.G."/>
            <person name="Kuspa A."/>
        </authorList>
    </citation>
    <scope>NUCLEOTIDE SEQUENCE [LARGE SCALE GENOMIC DNA]</scope>
    <source>
        <strain>AX4</strain>
    </source>
</reference>
<organism>
    <name type="scientific">Dictyostelium discoideum</name>
    <name type="common">Social amoeba</name>
    <dbReference type="NCBI Taxonomy" id="44689"/>
    <lineage>
        <taxon>Eukaryota</taxon>
        <taxon>Amoebozoa</taxon>
        <taxon>Evosea</taxon>
        <taxon>Eumycetozoa</taxon>
        <taxon>Dictyostelia</taxon>
        <taxon>Dictyosteliales</taxon>
        <taxon>Dictyosteliaceae</taxon>
        <taxon>Dictyostelium</taxon>
    </lineage>
</organism>
<evidence type="ECO:0000250" key="1"/>
<evidence type="ECO:0000255" key="2"/>
<evidence type="ECO:0000256" key="3">
    <source>
        <dbReference type="SAM" id="MobiDB-lite"/>
    </source>
</evidence>
<evidence type="ECO:0000305" key="4"/>
<gene>
    <name type="primary">grpE</name>
    <name type="ORF">DDB_G0283763</name>
</gene>
<sequence>MNSLIRRGLVSIRTSTVIKPSSFGLMRNNRFYSTENNQEAAKPEETENKPAPGSLEETIEKLKEELEETKKQLLYTAADRENVRRFAKEDNEKAKKFGIQSFTKELLEVVDQLEMATNLFPKEKLDENKELKDLHEGVKMTEQLFLKIMGNQGLQRFNPIGEKFDFNNHHAIFELNDPTKENNTVGHVVKQGYKLHDRLVRPAMVGVNKIKPQ</sequence>
<accession>Q54QF9</accession>
<proteinExistence type="inferred from homology"/>
<feature type="transit peptide" description="Mitochondrion" evidence="2">
    <location>
        <begin position="1"/>
        <end position="32"/>
    </location>
</feature>
<feature type="chain" id="PRO_0000328895" description="GrpE protein homolog, mitochondrial">
    <location>
        <begin position="33"/>
        <end position="213"/>
    </location>
</feature>
<feature type="region of interest" description="Disordered" evidence="3">
    <location>
        <begin position="34"/>
        <end position="54"/>
    </location>
</feature>
<keyword id="KW-0143">Chaperone</keyword>
<keyword id="KW-0496">Mitochondrion</keyword>
<keyword id="KW-1185">Reference proteome</keyword>
<keyword id="KW-0809">Transit peptide</keyword>
<name>GRPE_DICDI</name>